<sequence length="391" mass="41536">MSRFLICSFALVLLYPAGIDMYLVGLPRIAADLNASEAQLHIAFSVYLAGMAAAMLFAGKVADRSGRKPVAIPGAALFIIASVFCSLAETSTLFLAGRFLQGLGAGCCYVVAFAILRDTLDDRRRAKVLSLLNGITCIIPVLAPVLGHLIMLKFPWQSLFWTMAMMGIAVLMLSLFILKETRPASPAASDKPRENSESLLNRFFLSRVVITTLSVSVILTFVNTSPVLLMEIMGFERGEYATIMALTAGVSMTVSFSTPFALGIFKPRTLMITSQVLFLAAGITLAVSPSHAVSLFGITLICAGFSVGFGVAMSQALGPFSLRAGVASSTLGIAQVCGSSLWIWLAAVVGIGAWNMLIGILIACSIVSLLLIMFVAPGRPVAAHEEIHHHA</sequence>
<accession>A7ZTR5</accession>
<keyword id="KW-0046">Antibiotic resistance</keyword>
<keyword id="KW-0997">Cell inner membrane</keyword>
<keyword id="KW-1003">Cell membrane</keyword>
<keyword id="KW-0472">Membrane</keyword>
<keyword id="KW-1185">Reference proteome</keyword>
<keyword id="KW-0812">Transmembrane</keyword>
<keyword id="KW-1133">Transmembrane helix</keyword>
<keyword id="KW-0813">Transport</keyword>
<comment type="function">
    <text evidence="1">Confers resistance to chloramphenicol.</text>
</comment>
<comment type="subcellular location">
    <subcellularLocation>
        <location evidence="1">Cell inner membrane</location>
        <topology evidence="1">Multi-pass membrane protein</topology>
    </subcellularLocation>
</comment>
<comment type="similarity">
    <text evidence="1">Belongs to the major facilitator superfamily. DHA1 family. MdtL (TC 2.A.1.2.22) subfamily.</text>
</comment>
<proteinExistence type="inferred from homology"/>
<reference key="1">
    <citation type="journal article" date="2008" name="J. Bacteriol.">
        <title>The pangenome structure of Escherichia coli: comparative genomic analysis of E. coli commensal and pathogenic isolates.</title>
        <authorList>
            <person name="Rasko D.A."/>
            <person name="Rosovitz M.J."/>
            <person name="Myers G.S.A."/>
            <person name="Mongodin E.F."/>
            <person name="Fricke W.F."/>
            <person name="Gajer P."/>
            <person name="Crabtree J."/>
            <person name="Sebaihia M."/>
            <person name="Thomson N.R."/>
            <person name="Chaudhuri R."/>
            <person name="Henderson I.R."/>
            <person name="Sperandio V."/>
            <person name="Ravel J."/>
        </authorList>
    </citation>
    <scope>NUCLEOTIDE SEQUENCE [LARGE SCALE GENOMIC DNA]</scope>
    <source>
        <strain>E24377A / ETEC</strain>
    </source>
</reference>
<dbReference type="EMBL" id="CP000800">
    <property type="protein sequence ID" value="ABV21101.1"/>
    <property type="molecule type" value="Genomic_DNA"/>
</dbReference>
<dbReference type="RefSeq" id="WP_000086001.1">
    <property type="nucleotide sequence ID" value="NC_009801.1"/>
</dbReference>
<dbReference type="SMR" id="A7ZTR5"/>
<dbReference type="KEGG" id="ecw:EcE24377A_4219"/>
<dbReference type="HOGENOM" id="CLU_001265_47_1_6"/>
<dbReference type="Proteomes" id="UP000001122">
    <property type="component" value="Chromosome"/>
</dbReference>
<dbReference type="GO" id="GO:0005886">
    <property type="term" value="C:plasma membrane"/>
    <property type="evidence" value="ECO:0007669"/>
    <property type="project" value="UniProtKB-SubCell"/>
</dbReference>
<dbReference type="GO" id="GO:0022857">
    <property type="term" value="F:transmembrane transporter activity"/>
    <property type="evidence" value="ECO:0007669"/>
    <property type="project" value="UniProtKB-UniRule"/>
</dbReference>
<dbReference type="GO" id="GO:0046677">
    <property type="term" value="P:response to antibiotic"/>
    <property type="evidence" value="ECO:0007669"/>
    <property type="project" value="UniProtKB-KW"/>
</dbReference>
<dbReference type="CDD" id="cd17320">
    <property type="entry name" value="MFS_MdfA_MDR_like"/>
    <property type="match status" value="1"/>
</dbReference>
<dbReference type="FunFam" id="1.20.1720.10:FF:000003">
    <property type="entry name" value="Multidrug resistance protein MdtL"/>
    <property type="match status" value="1"/>
</dbReference>
<dbReference type="Gene3D" id="1.20.1720.10">
    <property type="entry name" value="Multidrug resistance protein D"/>
    <property type="match status" value="1"/>
</dbReference>
<dbReference type="HAMAP" id="MF_01530">
    <property type="entry name" value="MFS_MdtL"/>
    <property type="match status" value="1"/>
</dbReference>
<dbReference type="InterPro" id="IPR011701">
    <property type="entry name" value="MFS"/>
</dbReference>
<dbReference type="InterPro" id="IPR020846">
    <property type="entry name" value="MFS_dom"/>
</dbReference>
<dbReference type="InterPro" id="IPR050189">
    <property type="entry name" value="MFS_Efflux_Transporters"/>
</dbReference>
<dbReference type="InterPro" id="IPR036259">
    <property type="entry name" value="MFS_trans_sf"/>
</dbReference>
<dbReference type="InterPro" id="IPR023697">
    <property type="entry name" value="Multidrug-R_MdtL"/>
</dbReference>
<dbReference type="NCBIfam" id="NF007782">
    <property type="entry name" value="PRK10473.1"/>
    <property type="match status" value="1"/>
</dbReference>
<dbReference type="PANTHER" id="PTHR43124:SF3">
    <property type="entry name" value="CHLORAMPHENICOL EFFLUX PUMP RV0191"/>
    <property type="match status" value="1"/>
</dbReference>
<dbReference type="PANTHER" id="PTHR43124">
    <property type="entry name" value="PURINE EFFLUX PUMP PBUE"/>
    <property type="match status" value="1"/>
</dbReference>
<dbReference type="Pfam" id="PF07690">
    <property type="entry name" value="MFS_1"/>
    <property type="match status" value="1"/>
</dbReference>
<dbReference type="SUPFAM" id="SSF103473">
    <property type="entry name" value="MFS general substrate transporter"/>
    <property type="match status" value="1"/>
</dbReference>
<dbReference type="PROSITE" id="PS50850">
    <property type="entry name" value="MFS"/>
    <property type="match status" value="1"/>
</dbReference>
<organism>
    <name type="scientific">Escherichia coli O139:H28 (strain E24377A / ETEC)</name>
    <dbReference type="NCBI Taxonomy" id="331111"/>
    <lineage>
        <taxon>Bacteria</taxon>
        <taxon>Pseudomonadati</taxon>
        <taxon>Pseudomonadota</taxon>
        <taxon>Gammaproteobacteria</taxon>
        <taxon>Enterobacterales</taxon>
        <taxon>Enterobacteriaceae</taxon>
        <taxon>Escherichia</taxon>
    </lineage>
</organism>
<name>MDTL_ECO24</name>
<gene>
    <name evidence="1" type="primary">mdtL</name>
    <name type="ordered locus">EcE24377A_4219</name>
</gene>
<evidence type="ECO:0000255" key="1">
    <source>
        <dbReference type="HAMAP-Rule" id="MF_01530"/>
    </source>
</evidence>
<feature type="chain" id="PRO_1000068685" description="Multidrug resistance protein MdtL">
    <location>
        <begin position="1"/>
        <end position="391"/>
    </location>
</feature>
<feature type="transmembrane region" description="Helical" evidence="1">
    <location>
        <begin position="4"/>
        <end position="24"/>
    </location>
</feature>
<feature type="transmembrane region" description="Helical" evidence="1">
    <location>
        <begin position="42"/>
        <end position="62"/>
    </location>
</feature>
<feature type="transmembrane region" description="Helical" evidence="1">
    <location>
        <begin position="69"/>
        <end position="89"/>
    </location>
</feature>
<feature type="transmembrane region" description="Helical" evidence="1">
    <location>
        <begin position="93"/>
        <end position="113"/>
    </location>
</feature>
<feature type="transmembrane region" description="Helical" evidence="1">
    <location>
        <begin position="131"/>
        <end position="151"/>
    </location>
</feature>
<feature type="transmembrane region" description="Helical" evidence="1">
    <location>
        <begin position="158"/>
        <end position="178"/>
    </location>
</feature>
<feature type="transmembrane region" description="Helical" evidence="1">
    <location>
        <begin position="203"/>
        <end position="222"/>
    </location>
</feature>
<feature type="transmembrane region" description="Helical" evidence="1">
    <location>
        <begin position="245"/>
        <end position="265"/>
    </location>
</feature>
<feature type="transmembrane region" description="Helical" evidence="1">
    <location>
        <begin position="269"/>
        <end position="289"/>
    </location>
</feature>
<feature type="transmembrane region" description="Helical" evidence="1">
    <location>
        <begin position="293"/>
        <end position="313"/>
    </location>
</feature>
<feature type="transmembrane region" description="Helical" evidence="1">
    <location>
        <begin position="331"/>
        <end position="351"/>
    </location>
</feature>
<feature type="transmembrane region" description="Helical" evidence="1">
    <location>
        <begin position="356"/>
        <end position="376"/>
    </location>
</feature>
<protein>
    <recommendedName>
        <fullName evidence="1">Multidrug resistance protein MdtL</fullName>
    </recommendedName>
</protein>